<name>RECR_STRE4</name>
<organism>
    <name type="scientific">Streptococcus equi subsp. equi (strain 4047)</name>
    <dbReference type="NCBI Taxonomy" id="553482"/>
    <lineage>
        <taxon>Bacteria</taxon>
        <taxon>Bacillati</taxon>
        <taxon>Bacillota</taxon>
        <taxon>Bacilli</taxon>
        <taxon>Lactobacillales</taxon>
        <taxon>Streptococcaceae</taxon>
        <taxon>Streptococcus</taxon>
    </lineage>
</organism>
<gene>
    <name evidence="1" type="primary">recR</name>
    <name type="ordered locus">SEQ_0661</name>
</gene>
<accession>C0M8S3</accession>
<dbReference type="EMBL" id="FM204883">
    <property type="protein sequence ID" value="CAW92992.1"/>
    <property type="molecule type" value="Genomic_DNA"/>
</dbReference>
<dbReference type="RefSeq" id="WP_012679200.1">
    <property type="nucleotide sequence ID" value="NC_012471.1"/>
</dbReference>
<dbReference type="SMR" id="C0M8S3"/>
<dbReference type="GeneID" id="83704486"/>
<dbReference type="KEGG" id="seu:SEQ_0661"/>
<dbReference type="HOGENOM" id="CLU_060739_1_0_9"/>
<dbReference type="OrthoDB" id="9802672at2"/>
<dbReference type="Proteomes" id="UP000001365">
    <property type="component" value="Chromosome"/>
</dbReference>
<dbReference type="GO" id="GO:0003677">
    <property type="term" value="F:DNA binding"/>
    <property type="evidence" value="ECO:0007669"/>
    <property type="project" value="UniProtKB-UniRule"/>
</dbReference>
<dbReference type="GO" id="GO:0008270">
    <property type="term" value="F:zinc ion binding"/>
    <property type="evidence" value="ECO:0007669"/>
    <property type="project" value="UniProtKB-KW"/>
</dbReference>
<dbReference type="GO" id="GO:0006310">
    <property type="term" value="P:DNA recombination"/>
    <property type="evidence" value="ECO:0007669"/>
    <property type="project" value="UniProtKB-UniRule"/>
</dbReference>
<dbReference type="GO" id="GO:0006281">
    <property type="term" value="P:DNA repair"/>
    <property type="evidence" value="ECO:0007669"/>
    <property type="project" value="UniProtKB-UniRule"/>
</dbReference>
<dbReference type="CDD" id="cd01025">
    <property type="entry name" value="TOPRIM_recR"/>
    <property type="match status" value="1"/>
</dbReference>
<dbReference type="Gene3D" id="3.30.60.80">
    <property type="match status" value="1"/>
</dbReference>
<dbReference type="Gene3D" id="3.40.1360.10">
    <property type="match status" value="1"/>
</dbReference>
<dbReference type="Gene3D" id="6.10.250.240">
    <property type="match status" value="1"/>
</dbReference>
<dbReference type="Gene3D" id="1.10.8.420">
    <property type="entry name" value="RecR Domain 1"/>
    <property type="match status" value="1"/>
</dbReference>
<dbReference type="HAMAP" id="MF_00017">
    <property type="entry name" value="RecR"/>
    <property type="match status" value="1"/>
</dbReference>
<dbReference type="InterPro" id="IPR000093">
    <property type="entry name" value="DNA_Rcmb_RecR"/>
</dbReference>
<dbReference type="InterPro" id="IPR023627">
    <property type="entry name" value="Rcmb_RecR"/>
</dbReference>
<dbReference type="InterPro" id="IPR015967">
    <property type="entry name" value="Rcmb_RecR_Znf"/>
</dbReference>
<dbReference type="InterPro" id="IPR006171">
    <property type="entry name" value="TOPRIM_dom"/>
</dbReference>
<dbReference type="InterPro" id="IPR034137">
    <property type="entry name" value="TOPRIM_RecR"/>
</dbReference>
<dbReference type="NCBIfam" id="TIGR00615">
    <property type="entry name" value="recR"/>
    <property type="match status" value="1"/>
</dbReference>
<dbReference type="PANTHER" id="PTHR30446">
    <property type="entry name" value="RECOMBINATION PROTEIN RECR"/>
    <property type="match status" value="1"/>
</dbReference>
<dbReference type="PANTHER" id="PTHR30446:SF0">
    <property type="entry name" value="RECOMBINATION PROTEIN RECR"/>
    <property type="match status" value="1"/>
</dbReference>
<dbReference type="Pfam" id="PF21175">
    <property type="entry name" value="RecR_C"/>
    <property type="match status" value="1"/>
</dbReference>
<dbReference type="Pfam" id="PF21176">
    <property type="entry name" value="RecR_HhH"/>
    <property type="match status" value="1"/>
</dbReference>
<dbReference type="Pfam" id="PF02132">
    <property type="entry name" value="RecR_ZnF"/>
    <property type="match status" value="1"/>
</dbReference>
<dbReference type="Pfam" id="PF13662">
    <property type="entry name" value="Toprim_4"/>
    <property type="match status" value="1"/>
</dbReference>
<dbReference type="SMART" id="SM00493">
    <property type="entry name" value="TOPRIM"/>
    <property type="match status" value="1"/>
</dbReference>
<dbReference type="SUPFAM" id="SSF111304">
    <property type="entry name" value="Recombination protein RecR"/>
    <property type="match status" value="1"/>
</dbReference>
<dbReference type="PROSITE" id="PS01300">
    <property type="entry name" value="RECR"/>
    <property type="match status" value="1"/>
</dbReference>
<dbReference type="PROSITE" id="PS50880">
    <property type="entry name" value="TOPRIM"/>
    <property type="match status" value="1"/>
</dbReference>
<keyword id="KW-0227">DNA damage</keyword>
<keyword id="KW-0233">DNA recombination</keyword>
<keyword id="KW-0234">DNA repair</keyword>
<keyword id="KW-0479">Metal-binding</keyword>
<keyword id="KW-0862">Zinc</keyword>
<keyword id="KW-0863">Zinc-finger</keyword>
<reference key="1">
    <citation type="journal article" date="2009" name="PLoS Pathog.">
        <title>Genomic evidence for the evolution of Streptococcus equi: host restriction, increased virulence, and genetic exchange with human pathogens.</title>
        <authorList>
            <person name="Holden M.T.G."/>
            <person name="Heather Z."/>
            <person name="Paillot R."/>
            <person name="Steward K.F."/>
            <person name="Webb K."/>
            <person name="Ainslie F."/>
            <person name="Jourdan T."/>
            <person name="Bason N.C."/>
            <person name="Holroyd N.E."/>
            <person name="Mungall K."/>
            <person name="Quail M.A."/>
            <person name="Sanders M."/>
            <person name="Simmonds M."/>
            <person name="Willey D."/>
            <person name="Brooks K."/>
            <person name="Aanensen D.M."/>
            <person name="Spratt B.G."/>
            <person name="Jolley K.A."/>
            <person name="Maiden M.C.J."/>
            <person name="Kehoe M."/>
            <person name="Chanter N."/>
            <person name="Bentley S.D."/>
            <person name="Robinson C."/>
            <person name="Maskell D.J."/>
            <person name="Parkhill J."/>
            <person name="Waller A.S."/>
        </authorList>
    </citation>
    <scope>NUCLEOTIDE SEQUENCE [LARGE SCALE GENOMIC DNA]</scope>
    <source>
        <strain>4047</strain>
    </source>
</reference>
<feature type="chain" id="PRO_1000195410" description="Recombination protein RecR">
    <location>
        <begin position="1"/>
        <end position="198"/>
    </location>
</feature>
<feature type="domain" description="Toprim" evidence="1">
    <location>
        <begin position="80"/>
        <end position="175"/>
    </location>
</feature>
<feature type="zinc finger region" description="C4-type" evidence="1">
    <location>
        <begin position="57"/>
        <end position="72"/>
    </location>
</feature>
<evidence type="ECO:0000255" key="1">
    <source>
        <dbReference type="HAMAP-Rule" id="MF_00017"/>
    </source>
</evidence>
<protein>
    <recommendedName>
        <fullName evidence="1">Recombination protein RecR</fullName>
    </recommendedName>
</protein>
<sequence>MLYPIPIAKLIESYSKLPGIGVKTATRLAFYTIGMSDEDVNDFAKNLLAAKRELTYCSICGNLTDDDPCHICTDSSRDKEIILVVEDSKDVSAMEKIQEYHGYYHVLHGLISPMNGVGPDDINLKSLITRLMAGEATEVIVATNATADGEATAMYISRLLKPAGIKVTRLARGLAVGSDIEYADEVTLLRAIENRTEL</sequence>
<proteinExistence type="inferred from homology"/>
<comment type="function">
    <text evidence="1">May play a role in DNA repair. It seems to be involved in an RecBC-independent recombinational process of DNA repair. It may act with RecF and RecO.</text>
</comment>
<comment type="similarity">
    <text evidence="1">Belongs to the RecR family.</text>
</comment>